<reference key="1">
    <citation type="journal article" date="2002" name="Nucleic Acids Res.">
        <title>Genome sequence of Oceanobacillus iheyensis isolated from the Iheya Ridge and its unexpected adaptive capabilities to extreme environments.</title>
        <authorList>
            <person name="Takami H."/>
            <person name="Takaki Y."/>
            <person name="Uchiyama I."/>
        </authorList>
    </citation>
    <scope>NUCLEOTIDE SEQUENCE [LARGE SCALE GENOMIC DNA]</scope>
    <source>
        <strain>DSM 14371 / CIP 107618 / JCM 11309 / KCTC 3954 / HTE831</strain>
    </source>
</reference>
<sequence>MVLPFKHEPFTDFTVKENRKDYQDALAKVKEELGKDYPLVINGEKIYTDDKLISINPSNKNEVVGNVSKATKQHIEEAFTSAKEAFKEWKSWSAEDRARVLYRAAAIVRRRKHEFSAWLSYDAGKPWDQADGDTAEGIDFLEYYARHMVELEKGKPLADRPNEDNKYFYQPLGPGVVIPPWNFAFAIVCGTTVAPIVAGNPVLLKPSENTPVIAYKLVEVLEEAGLPKGVLNFVPGDPAEIGDYLVDHKDTHFINFTGSRATGVRIFERATKIQDGQTHLKRIVAEMGGKDTIIVDESADLDLAAESIVHSAFGFSGQKCSACSRAVIHESVYDEVIEKSVELAKTLTVGNPTEDNVYMASVVNQKQFDKIKDYIEVGKQEGELVFGGETDDNKGFFVHPTIFKDLDPKARIMQEEIFGPVVAFSKAKSFDELLDIANNTEYGLTGAVISNNRENLNRAQTEFLVGNLYFNRGCTAAIVGYQPFGGFKMSGTDSKAGGPDYLQHFLNAKVVTERF</sequence>
<proteinExistence type="inferred from homology"/>
<accession>Q8ERF4</accession>
<feature type="chain" id="PRO_0000056513" description="1-pyrroline-5-carboxylate dehydrogenase">
    <location>
        <begin position="1"/>
        <end position="515"/>
    </location>
</feature>
<feature type="active site" evidence="1">
    <location>
        <position position="286"/>
    </location>
</feature>
<feature type="active site" evidence="1">
    <location>
        <position position="320"/>
    </location>
</feature>
<protein>
    <recommendedName>
        <fullName evidence="1">1-pyrroline-5-carboxylate dehydrogenase</fullName>
        <shortName evidence="1">P5C dehydrogenase</shortName>
        <ecNumber evidence="1">1.2.1.88</ecNumber>
    </recommendedName>
    <alternativeName>
        <fullName evidence="1">L-glutamate gamma-semialdehyde dehydrogenase</fullName>
    </alternativeName>
</protein>
<name>ROCA_OCEIH</name>
<evidence type="ECO:0000255" key="1">
    <source>
        <dbReference type="HAMAP-Rule" id="MF_00733"/>
    </source>
</evidence>
<organism>
    <name type="scientific">Oceanobacillus iheyensis (strain DSM 14371 / CIP 107618 / JCM 11309 / KCTC 3954 / HTE831)</name>
    <dbReference type="NCBI Taxonomy" id="221109"/>
    <lineage>
        <taxon>Bacteria</taxon>
        <taxon>Bacillati</taxon>
        <taxon>Bacillota</taxon>
        <taxon>Bacilli</taxon>
        <taxon>Bacillales</taxon>
        <taxon>Bacillaceae</taxon>
        <taxon>Oceanobacillus</taxon>
    </lineage>
</organism>
<dbReference type="EC" id="1.2.1.88" evidence="1"/>
<dbReference type="EMBL" id="BA000028">
    <property type="protein sequence ID" value="BAC13305.1"/>
    <property type="molecule type" value="Genomic_DNA"/>
</dbReference>
<dbReference type="RefSeq" id="WP_011065755.1">
    <property type="nucleotide sequence ID" value="NC_004193.1"/>
</dbReference>
<dbReference type="SMR" id="Q8ERF4"/>
<dbReference type="STRING" id="221109.gene:10733589"/>
<dbReference type="KEGG" id="oih:OB1349"/>
<dbReference type="eggNOG" id="COG1012">
    <property type="taxonomic scope" value="Bacteria"/>
</dbReference>
<dbReference type="HOGENOM" id="CLU_005391_0_0_9"/>
<dbReference type="OrthoDB" id="9762913at2"/>
<dbReference type="PhylomeDB" id="Q8ERF4"/>
<dbReference type="UniPathway" id="UPA00261">
    <property type="reaction ID" value="UER00374"/>
</dbReference>
<dbReference type="Proteomes" id="UP000000822">
    <property type="component" value="Chromosome"/>
</dbReference>
<dbReference type="GO" id="GO:0009898">
    <property type="term" value="C:cytoplasmic side of plasma membrane"/>
    <property type="evidence" value="ECO:0007669"/>
    <property type="project" value="TreeGrafter"/>
</dbReference>
<dbReference type="GO" id="GO:0003842">
    <property type="term" value="F:1-pyrroline-5-carboxylate dehydrogenase activity"/>
    <property type="evidence" value="ECO:0007669"/>
    <property type="project" value="UniProtKB-UniRule"/>
</dbReference>
<dbReference type="GO" id="GO:0006537">
    <property type="term" value="P:glutamate biosynthetic process"/>
    <property type="evidence" value="ECO:0007669"/>
    <property type="project" value="UniProtKB-UniRule"/>
</dbReference>
<dbReference type="GO" id="GO:0010133">
    <property type="term" value="P:proline catabolic process to glutamate"/>
    <property type="evidence" value="ECO:0007669"/>
    <property type="project" value="UniProtKB-UniPathway"/>
</dbReference>
<dbReference type="CDD" id="cd07124">
    <property type="entry name" value="ALDH_PutA-P5CDH-RocA"/>
    <property type="match status" value="1"/>
</dbReference>
<dbReference type="FunFam" id="3.40.309.10:FF:000005">
    <property type="entry name" value="1-pyrroline-5-carboxylate dehydrogenase 1"/>
    <property type="match status" value="1"/>
</dbReference>
<dbReference type="FunFam" id="3.40.605.10:FF:000045">
    <property type="entry name" value="1-pyrroline-5-carboxylate dehydrogenase 1"/>
    <property type="match status" value="1"/>
</dbReference>
<dbReference type="Gene3D" id="3.40.605.10">
    <property type="entry name" value="Aldehyde Dehydrogenase, Chain A, domain 1"/>
    <property type="match status" value="1"/>
</dbReference>
<dbReference type="Gene3D" id="3.40.309.10">
    <property type="entry name" value="Aldehyde Dehydrogenase, Chain A, domain 2"/>
    <property type="match status" value="1"/>
</dbReference>
<dbReference type="HAMAP" id="MF_00733">
    <property type="entry name" value="RocA"/>
    <property type="match status" value="1"/>
</dbReference>
<dbReference type="InterPro" id="IPR016161">
    <property type="entry name" value="Ald_DH/histidinol_DH"/>
</dbReference>
<dbReference type="InterPro" id="IPR016163">
    <property type="entry name" value="Ald_DH_C"/>
</dbReference>
<dbReference type="InterPro" id="IPR016160">
    <property type="entry name" value="Ald_DH_CS_CYS"/>
</dbReference>
<dbReference type="InterPro" id="IPR029510">
    <property type="entry name" value="Ald_DH_CS_GLU"/>
</dbReference>
<dbReference type="InterPro" id="IPR016162">
    <property type="entry name" value="Ald_DH_N"/>
</dbReference>
<dbReference type="InterPro" id="IPR015590">
    <property type="entry name" value="Aldehyde_DH_dom"/>
</dbReference>
<dbReference type="InterPro" id="IPR050485">
    <property type="entry name" value="Proline_metab_enzyme"/>
</dbReference>
<dbReference type="InterPro" id="IPR005932">
    <property type="entry name" value="RocA"/>
</dbReference>
<dbReference type="InterPro" id="IPR047597">
    <property type="entry name" value="RocA_bacillales"/>
</dbReference>
<dbReference type="NCBIfam" id="TIGR01237">
    <property type="entry name" value="D1pyr5carbox2"/>
    <property type="match status" value="1"/>
</dbReference>
<dbReference type="NCBIfam" id="NF002852">
    <property type="entry name" value="PRK03137.1"/>
    <property type="match status" value="1"/>
</dbReference>
<dbReference type="PANTHER" id="PTHR42862">
    <property type="entry name" value="DELTA-1-PYRROLINE-5-CARBOXYLATE DEHYDROGENASE 1, ISOFORM A-RELATED"/>
    <property type="match status" value="1"/>
</dbReference>
<dbReference type="PANTHER" id="PTHR42862:SF1">
    <property type="entry name" value="DELTA-1-PYRROLINE-5-CARBOXYLATE DEHYDROGENASE 2, ISOFORM A-RELATED"/>
    <property type="match status" value="1"/>
</dbReference>
<dbReference type="Pfam" id="PF00171">
    <property type="entry name" value="Aldedh"/>
    <property type="match status" value="1"/>
</dbReference>
<dbReference type="SUPFAM" id="SSF53720">
    <property type="entry name" value="ALDH-like"/>
    <property type="match status" value="1"/>
</dbReference>
<dbReference type="PROSITE" id="PS00070">
    <property type="entry name" value="ALDEHYDE_DEHYDR_CYS"/>
    <property type="match status" value="1"/>
</dbReference>
<dbReference type="PROSITE" id="PS00687">
    <property type="entry name" value="ALDEHYDE_DEHYDR_GLU"/>
    <property type="match status" value="1"/>
</dbReference>
<keyword id="KW-0520">NAD</keyword>
<keyword id="KW-0560">Oxidoreductase</keyword>
<keyword id="KW-1185">Reference proteome</keyword>
<comment type="catalytic activity">
    <reaction evidence="1">
        <text>L-glutamate 5-semialdehyde + NAD(+) + H2O = L-glutamate + NADH + 2 H(+)</text>
        <dbReference type="Rhea" id="RHEA:30235"/>
        <dbReference type="ChEBI" id="CHEBI:15377"/>
        <dbReference type="ChEBI" id="CHEBI:15378"/>
        <dbReference type="ChEBI" id="CHEBI:29985"/>
        <dbReference type="ChEBI" id="CHEBI:57540"/>
        <dbReference type="ChEBI" id="CHEBI:57945"/>
        <dbReference type="ChEBI" id="CHEBI:58066"/>
        <dbReference type="EC" id="1.2.1.88"/>
    </reaction>
</comment>
<comment type="pathway">
    <text evidence="1">Amino-acid degradation; L-proline degradation into L-glutamate; L-glutamate from L-proline: step 2/2.</text>
</comment>
<comment type="similarity">
    <text evidence="1">Belongs to the aldehyde dehydrogenase family. RocA subfamily.</text>
</comment>
<gene>
    <name evidence="1" type="primary">rocA</name>
    <name type="ordered locus">OB1349</name>
</gene>